<accession>A8ARN6</accession>
<protein>
    <recommendedName>
        <fullName evidence="1">DNA-directed RNA polymerase subunit omega</fullName>
        <shortName evidence="1">RNAP omega subunit</shortName>
        <ecNumber evidence="1">2.7.7.6</ecNumber>
    </recommendedName>
    <alternativeName>
        <fullName evidence="1">RNA polymerase omega subunit</fullName>
    </alternativeName>
    <alternativeName>
        <fullName evidence="1">Transcriptase subunit omega</fullName>
    </alternativeName>
</protein>
<reference key="1">
    <citation type="submission" date="2007-08" db="EMBL/GenBank/DDBJ databases">
        <authorList>
            <consortium name="The Citrobacter koseri Genome Sequencing Project"/>
            <person name="McClelland M."/>
            <person name="Sanderson E.K."/>
            <person name="Porwollik S."/>
            <person name="Spieth J."/>
            <person name="Clifton W.S."/>
            <person name="Latreille P."/>
            <person name="Courtney L."/>
            <person name="Wang C."/>
            <person name="Pepin K."/>
            <person name="Bhonagiri V."/>
            <person name="Nash W."/>
            <person name="Johnson M."/>
            <person name="Thiruvilangam P."/>
            <person name="Wilson R."/>
        </authorList>
    </citation>
    <scope>NUCLEOTIDE SEQUENCE [LARGE SCALE GENOMIC DNA]</scope>
    <source>
        <strain>ATCC BAA-895 / CDC 4225-83 / SGSC4696</strain>
    </source>
</reference>
<comment type="function">
    <text evidence="1">Promotes RNA polymerase assembly. Latches the N- and C-terminal regions of the beta' subunit thereby facilitating its interaction with the beta and alpha subunits.</text>
</comment>
<comment type="catalytic activity">
    <reaction evidence="1">
        <text>RNA(n) + a ribonucleoside 5'-triphosphate = RNA(n+1) + diphosphate</text>
        <dbReference type="Rhea" id="RHEA:21248"/>
        <dbReference type="Rhea" id="RHEA-COMP:14527"/>
        <dbReference type="Rhea" id="RHEA-COMP:17342"/>
        <dbReference type="ChEBI" id="CHEBI:33019"/>
        <dbReference type="ChEBI" id="CHEBI:61557"/>
        <dbReference type="ChEBI" id="CHEBI:140395"/>
        <dbReference type="EC" id="2.7.7.6"/>
    </reaction>
</comment>
<comment type="subunit">
    <text evidence="1">The RNAP catalytic core consists of 2 alpha, 1 beta, 1 beta' and 1 omega subunit. When a sigma factor is associated with the core the holoenzyme is formed, which can initiate transcription.</text>
</comment>
<comment type="similarity">
    <text evidence="1">Belongs to the RNA polymerase subunit omega family.</text>
</comment>
<sequence>MARVTVQDAVEKIGNRFDLVLVAARRARQMQVGGKDPLVPEENDKTTVIALREIEEGLINNQILDVRERQEQQEQEAAELQAVTAIAEGRR</sequence>
<name>RPOZ_CITK8</name>
<organism>
    <name type="scientific">Citrobacter koseri (strain ATCC BAA-895 / CDC 4225-83 / SGSC4696)</name>
    <dbReference type="NCBI Taxonomy" id="290338"/>
    <lineage>
        <taxon>Bacteria</taxon>
        <taxon>Pseudomonadati</taxon>
        <taxon>Pseudomonadota</taxon>
        <taxon>Gammaproteobacteria</taxon>
        <taxon>Enterobacterales</taxon>
        <taxon>Enterobacteriaceae</taxon>
        <taxon>Citrobacter</taxon>
    </lineage>
</organism>
<evidence type="ECO:0000255" key="1">
    <source>
        <dbReference type="HAMAP-Rule" id="MF_00366"/>
    </source>
</evidence>
<feature type="chain" id="PRO_1000005909" description="DNA-directed RNA polymerase subunit omega">
    <location>
        <begin position="1"/>
        <end position="91"/>
    </location>
</feature>
<proteinExistence type="inferred from homology"/>
<gene>
    <name evidence="1" type="primary">rpoZ</name>
    <name type="ordered locus">CKO_05106</name>
</gene>
<keyword id="KW-0240">DNA-directed RNA polymerase</keyword>
<keyword id="KW-0548">Nucleotidyltransferase</keyword>
<keyword id="KW-1185">Reference proteome</keyword>
<keyword id="KW-0804">Transcription</keyword>
<keyword id="KW-0808">Transferase</keyword>
<dbReference type="EC" id="2.7.7.6" evidence="1"/>
<dbReference type="EMBL" id="CP000822">
    <property type="protein sequence ID" value="ABV16149.1"/>
    <property type="molecule type" value="Genomic_DNA"/>
</dbReference>
<dbReference type="RefSeq" id="WP_000135058.1">
    <property type="nucleotide sequence ID" value="NC_009792.1"/>
</dbReference>
<dbReference type="SMR" id="A8ARN6"/>
<dbReference type="STRING" id="290338.CKO_05106"/>
<dbReference type="GeneID" id="98390719"/>
<dbReference type="KEGG" id="cko:CKO_05106"/>
<dbReference type="HOGENOM" id="CLU_125406_5_3_6"/>
<dbReference type="OrthoDB" id="9796300at2"/>
<dbReference type="EvolutionaryTrace" id="A8ARN6"/>
<dbReference type="Proteomes" id="UP000008148">
    <property type="component" value="Chromosome"/>
</dbReference>
<dbReference type="GO" id="GO:0000428">
    <property type="term" value="C:DNA-directed RNA polymerase complex"/>
    <property type="evidence" value="ECO:0007669"/>
    <property type="project" value="UniProtKB-KW"/>
</dbReference>
<dbReference type="GO" id="GO:0003677">
    <property type="term" value="F:DNA binding"/>
    <property type="evidence" value="ECO:0007669"/>
    <property type="project" value="UniProtKB-UniRule"/>
</dbReference>
<dbReference type="GO" id="GO:0003899">
    <property type="term" value="F:DNA-directed RNA polymerase activity"/>
    <property type="evidence" value="ECO:0007669"/>
    <property type="project" value="UniProtKB-UniRule"/>
</dbReference>
<dbReference type="GO" id="GO:0006351">
    <property type="term" value="P:DNA-templated transcription"/>
    <property type="evidence" value="ECO:0007669"/>
    <property type="project" value="UniProtKB-UniRule"/>
</dbReference>
<dbReference type="FunFam" id="3.90.940.10:FF:000001">
    <property type="entry name" value="DNA-directed RNA polymerase subunit omega"/>
    <property type="match status" value="1"/>
</dbReference>
<dbReference type="Gene3D" id="3.90.940.10">
    <property type="match status" value="1"/>
</dbReference>
<dbReference type="HAMAP" id="MF_00366">
    <property type="entry name" value="RNApol_bact_RpoZ"/>
    <property type="match status" value="1"/>
</dbReference>
<dbReference type="InterPro" id="IPR003716">
    <property type="entry name" value="DNA-dir_RNA_pol_omega"/>
</dbReference>
<dbReference type="InterPro" id="IPR006110">
    <property type="entry name" value="Pol_omega/Rpo6/RPB6"/>
</dbReference>
<dbReference type="InterPro" id="IPR036161">
    <property type="entry name" value="RPB6/omega-like_sf"/>
</dbReference>
<dbReference type="NCBIfam" id="TIGR00690">
    <property type="entry name" value="rpoZ"/>
    <property type="match status" value="1"/>
</dbReference>
<dbReference type="PANTHER" id="PTHR34476">
    <property type="entry name" value="DNA-DIRECTED RNA POLYMERASE SUBUNIT OMEGA"/>
    <property type="match status" value="1"/>
</dbReference>
<dbReference type="PANTHER" id="PTHR34476:SF1">
    <property type="entry name" value="DNA-DIRECTED RNA POLYMERASE SUBUNIT OMEGA"/>
    <property type="match status" value="1"/>
</dbReference>
<dbReference type="Pfam" id="PF01192">
    <property type="entry name" value="RNA_pol_Rpb6"/>
    <property type="match status" value="1"/>
</dbReference>
<dbReference type="SMART" id="SM01409">
    <property type="entry name" value="RNA_pol_Rpb6"/>
    <property type="match status" value="1"/>
</dbReference>
<dbReference type="SUPFAM" id="SSF63562">
    <property type="entry name" value="RPB6/omega subunit-like"/>
    <property type="match status" value="1"/>
</dbReference>